<gene>
    <name type="primary">c1d</name>
</gene>
<keyword id="KW-0175">Coiled coil</keyword>
<keyword id="KW-0963">Cytoplasm</keyword>
<keyword id="KW-0238">DNA-binding</keyword>
<keyword id="KW-0271">Exosome</keyword>
<keyword id="KW-0539">Nucleus</keyword>
<keyword id="KW-1185">Reference proteome</keyword>
<keyword id="KW-0694">RNA-binding</keyword>
<keyword id="KW-0698">rRNA processing</keyword>
<proteinExistence type="evidence at transcript level"/>
<organism>
    <name type="scientific">Xenopus laevis</name>
    <name type="common">African clawed frog</name>
    <dbReference type="NCBI Taxonomy" id="8355"/>
    <lineage>
        <taxon>Eukaryota</taxon>
        <taxon>Metazoa</taxon>
        <taxon>Chordata</taxon>
        <taxon>Craniata</taxon>
        <taxon>Vertebrata</taxon>
        <taxon>Euteleostomi</taxon>
        <taxon>Amphibia</taxon>
        <taxon>Batrachia</taxon>
        <taxon>Anura</taxon>
        <taxon>Pipoidea</taxon>
        <taxon>Pipidae</taxon>
        <taxon>Xenopodinae</taxon>
        <taxon>Xenopus</taxon>
        <taxon>Xenopus</taxon>
    </lineage>
</organism>
<reference key="1">
    <citation type="submission" date="2005-10" db="EMBL/GenBank/DDBJ databases">
        <authorList>
            <consortium name="NIH - Xenopus Gene Collection (XGC) project"/>
        </authorList>
    </citation>
    <scope>NUCLEOTIDE SEQUENCE [LARGE SCALE MRNA]</scope>
    <source>
        <tissue>Testis</tissue>
    </source>
</reference>
<feature type="chain" id="PRO_0000316305" description="Nuclear nucleic acid-binding protein C1D">
    <location>
        <begin position="1"/>
        <end position="145"/>
    </location>
</feature>
<feature type="coiled-coil region" evidence="2">
    <location>
        <begin position="84"/>
        <end position="109"/>
    </location>
</feature>
<protein>
    <recommendedName>
        <fullName>Nuclear nucleic acid-binding protein C1D</fullName>
    </recommendedName>
</protein>
<accession>Q3KPR1</accession>
<evidence type="ECO:0000250" key="1">
    <source>
        <dbReference type="UniProtKB" id="Q13901"/>
    </source>
</evidence>
<evidence type="ECO:0000255" key="2"/>
<evidence type="ECO:0000305" key="3"/>
<dbReference type="EMBL" id="BC106601">
    <property type="protein sequence ID" value="AAI06602.1"/>
    <property type="molecule type" value="mRNA"/>
</dbReference>
<dbReference type="RefSeq" id="NP_001089806.1">
    <property type="nucleotide sequence ID" value="NM_001096337.1"/>
</dbReference>
<dbReference type="SMR" id="Q3KPR1"/>
<dbReference type="DNASU" id="734871"/>
<dbReference type="GeneID" id="734871"/>
<dbReference type="KEGG" id="xla:734871"/>
<dbReference type="AGR" id="Xenbase:XB-GENE-1014454"/>
<dbReference type="CTD" id="734871"/>
<dbReference type="Xenbase" id="XB-GENE-1014454">
    <property type="gene designation" value="c1d.L"/>
</dbReference>
<dbReference type="OMA" id="KLMSMPR"/>
<dbReference type="OrthoDB" id="1421013at2759"/>
<dbReference type="Proteomes" id="UP000186698">
    <property type="component" value="Chromosome 5L"/>
</dbReference>
<dbReference type="Bgee" id="734871">
    <property type="expression patterns" value="Expressed in blastula and 19 other cell types or tissues"/>
</dbReference>
<dbReference type="GO" id="GO:0005737">
    <property type="term" value="C:cytoplasm"/>
    <property type="evidence" value="ECO:0007669"/>
    <property type="project" value="UniProtKB-SubCell"/>
</dbReference>
<dbReference type="GO" id="GO:0000178">
    <property type="term" value="C:exosome (RNase complex)"/>
    <property type="evidence" value="ECO:0000318"/>
    <property type="project" value="GO_Central"/>
</dbReference>
<dbReference type="GO" id="GO:0005730">
    <property type="term" value="C:nucleolus"/>
    <property type="evidence" value="ECO:0000318"/>
    <property type="project" value="GO_Central"/>
</dbReference>
<dbReference type="GO" id="GO:0003677">
    <property type="term" value="F:DNA binding"/>
    <property type="evidence" value="ECO:0000318"/>
    <property type="project" value="GO_Central"/>
</dbReference>
<dbReference type="GO" id="GO:0003723">
    <property type="term" value="F:RNA binding"/>
    <property type="evidence" value="ECO:0000318"/>
    <property type="project" value="GO_Central"/>
</dbReference>
<dbReference type="GO" id="GO:0000460">
    <property type="term" value="P:maturation of 5.8S rRNA"/>
    <property type="evidence" value="ECO:0000318"/>
    <property type="project" value="GO_Central"/>
</dbReference>
<dbReference type="GO" id="GO:0010468">
    <property type="term" value="P:regulation of gene expression"/>
    <property type="evidence" value="ECO:0000318"/>
    <property type="project" value="GO_Central"/>
</dbReference>
<dbReference type="InterPro" id="IPR011082">
    <property type="entry name" value="Exosome-assoc_fac/DNA_repair"/>
</dbReference>
<dbReference type="InterPro" id="IPR007146">
    <property type="entry name" value="Sas10/Utp3/C1D"/>
</dbReference>
<dbReference type="PANTHER" id="PTHR15341:SF3">
    <property type="entry name" value="NUCLEAR NUCLEIC ACID-BINDING PROTEIN C1D"/>
    <property type="match status" value="1"/>
</dbReference>
<dbReference type="PANTHER" id="PTHR15341">
    <property type="entry name" value="SUN-COR STEROID HORMONE RECEPTOR CO-REPRESSOR"/>
    <property type="match status" value="1"/>
</dbReference>
<dbReference type="Pfam" id="PF04000">
    <property type="entry name" value="Sas10_Utp3"/>
    <property type="match status" value="1"/>
</dbReference>
<sequence length="145" mass="16733">MADQSLSTEEYPTEIHEYLMAFENSVGSVDEMLKKMMSVSRSELLQKIEPLEQAKLDLVSAYTLNSLFWIYLTTQGINPKEHPVKEELERIRGYMNRVKEITDRKKAARLDKGAARRFIKHALCDPTSEEAPPAKMDCKAKKKRK</sequence>
<name>C1D_XENLA</name>
<comment type="function">
    <text evidence="1">Plays a role in the recruitment of the exosome to pre-rRNA to mediate the 3'-5' end processing of the 5.8S rRNA.</text>
</comment>
<comment type="subunit">
    <text evidence="1">Monomer and homodimer. Associates with the RNA exosome complex.</text>
</comment>
<comment type="subcellular location">
    <subcellularLocation>
        <location evidence="1">Nucleus</location>
    </subcellularLocation>
    <subcellularLocation>
        <location evidence="1">Cytoplasm</location>
    </subcellularLocation>
    <subcellularLocation>
        <location evidence="1">Nucleus</location>
        <location evidence="1">Nucleolus</location>
    </subcellularLocation>
</comment>
<comment type="similarity">
    <text evidence="3">Belongs to the C1D family.</text>
</comment>